<proteinExistence type="inferred from homology"/>
<comment type="function">
    <text evidence="1">Part of the ABC transporter complex PstSACB involved in phosphate import. Responsible for energy coupling to the transport system.</text>
</comment>
<comment type="catalytic activity">
    <reaction evidence="1">
        <text>phosphate(out) + ATP + H2O = ADP + 2 phosphate(in) + H(+)</text>
        <dbReference type="Rhea" id="RHEA:24440"/>
        <dbReference type="ChEBI" id="CHEBI:15377"/>
        <dbReference type="ChEBI" id="CHEBI:15378"/>
        <dbReference type="ChEBI" id="CHEBI:30616"/>
        <dbReference type="ChEBI" id="CHEBI:43474"/>
        <dbReference type="ChEBI" id="CHEBI:456216"/>
        <dbReference type="EC" id="7.3.2.1"/>
    </reaction>
</comment>
<comment type="subunit">
    <text evidence="1">The complex is composed of two ATP-binding proteins (PstB), two transmembrane proteins (PstC and PstA) and a solute-binding protein (PstS).</text>
</comment>
<comment type="subcellular location">
    <subcellularLocation>
        <location evidence="1">Cell membrane</location>
        <topology evidence="1">Peripheral membrane protein</topology>
    </subcellularLocation>
</comment>
<comment type="similarity">
    <text evidence="1">Belongs to the ABC transporter superfamily. Phosphate importer (TC 3.A.1.7) family.</text>
</comment>
<reference key="1">
    <citation type="journal article" date="2004" name="Genome Res.">
        <title>Genome sequence of Haloarcula marismortui: a halophilic archaeon from the Dead Sea.</title>
        <authorList>
            <person name="Baliga N.S."/>
            <person name="Bonneau R."/>
            <person name="Facciotti M.T."/>
            <person name="Pan M."/>
            <person name="Glusman G."/>
            <person name="Deutsch E.W."/>
            <person name="Shannon P."/>
            <person name="Chiu Y."/>
            <person name="Weng R.S."/>
            <person name="Gan R.R."/>
            <person name="Hung P."/>
            <person name="Date S.V."/>
            <person name="Marcotte E."/>
            <person name="Hood L."/>
            <person name="Ng W.V."/>
        </authorList>
    </citation>
    <scope>NUCLEOTIDE SEQUENCE [LARGE SCALE GENOMIC DNA]</scope>
    <source>
        <strain>ATCC 43049 / DSM 3752 / JCM 8966 / VKM B-1809</strain>
    </source>
</reference>
<protein>
    <recommendedName>
        <fullName evidence="1">Phosphate import ATP-binding protein PstB 1</fullName>
        <ecNumber evidence="1">7.3.2.1</ecNumber>
    </recommendedName>
    <alternativeName>
        <fullName evidence="1">ABC phosphate transporter 1</fullName>
    </alternativeName>
    <alternativeName>
        <fullName evidence="1">Phosphate-transporting ATPase 1</fullName>
    </alternativeName>
</protein>
<name>PSTB1_HALMA</name>
<organism>
    <name type="scientific">Haloarcula marismortui (strain ATCC 43049 / DSM 3752 / JCM 8966 / VKM B-1809)</name>
    <name type="common">Halobacterium marismortui</name>
    <dbReference type="NCBI Taxonomy" id="272569"/>
    <lineage>
        <taxon>Archaea</taxon>
        <taxon>Methanobacteriati</taxon>
        <taxon>Methanobacteriota</taxon>
        <taxon>Stenosarchaea group</taxon>
        <taxon>Halobacteria</taxon>
        <taxon>Halobacteriales</taxon>
        <taxon>Haloarculaceae</taxon>
        <taxon>Haloarcula</taxon>
    </lineage>
</organism>
<sequence length="299" mass="32758">MTENEMTSNDSTEPTPTTETAASSPDPSGDPLIEQSIDVEGTDSTAAETGKPVIESSDLNVFYGETQALQSIDLAIPEKQVTAMIGPSGCGKSTFLRCINRMNDLIDAARVEGDLHFEGKNVYDADVDPVALRRRIGMVFQHPNPFPKSIYDNVAYGLRIQDQTENIDEKVETALKRAALWDEVKDQLDKSALDLSGGQQQRLCIARAIAVDPDVILMDEPASALDPIATSKIEDLIEELAEEFTVVIVTHNMQQAARISDKTAVFLTGGELVEFDDTDKIFENPESQRVEDYITGKFG</sequence>
<feature type="chain" id="PRO_0000272583" description="Phosphate import ATP-binding protein PstB 1">
    <location>
        <begin position="1"/>
        <end position="299"/>
    </location>
</feature>
<feature type="domain" description="ABC transporter" evidence="1">
    <location>
        <begin position="54"/>
        <end position="294"/>
    </location>
</feature>
<feature type="region of interest" description="Disordered" evidence="2">
    <location>
        <begin position="1"/>
        <end position="51"/>
    </location>
</feature>
<feature type="compositionally biased region" description="Low complexity" evidence="2">
    <location>
        <begin position="10"/>
        <end position="27"/>
    </location>
</feature>
<feature type="binding site" evidence="1">
    <location>
        <begin position="86"/>
        <end position="93"/>
    </location>
    <ligand>
        <name>ATP</name>
        <dbReference type="ChEBI" id="CHEBI:30616"/>
    </ligand>
</feature>
<accession>Q5V225</accession>
<evidence type="ECO:0000255" key="1">
    <source>
        <dbReference type="HAMAP-Rule" id="MF_01702"/>
    </source>
</evidence>
<evidence type="ECO:0000256" key="2">
    <source>
        <dbReference type="SAM" id="MobiDB-lite"/>
    </source>
</evidence>
<gene>
    <name evidence="1" type="primary">pstB1</name>
    <name type="ordered locus">rrnAC1505</name>
</gene>
<dbReference type="EC" id="7.3.2.1" evidence="1"/>
<dbReference type="EMBL" id="AY596297">
    <property type="protein sequence ID" value="AAV46427.1"/>
    <property type="molecule type" value="Genomic_DNA"/>
</dbReference>
<dbReference type="SMR" id="Q5V225"/>
<dbReference type="STRING" id="272569.rrnAC1505"/>
<dbReference type="PaxDb" id="272569-rrnAC1505"/>
<dbReference type="EnsemblBacteria" id="AAV46427">
    <property type="protein sequence ID" value="AAV46427"/>
    <property type="gene ID" value="rrnAC1505"/>
</dbReference>
<dbReference type="KEGG" id="hma:rrnAC1505"/>
<dbReference type="PATRIC" id="fig|272569.17.peg.2194"/>
<dbReference type="eggNOG" id="arCOG00231">
    <property type="taxonomic scope" value="Archaea"/>
</dbReference>
<dbReference type="HOGENOM" id="CLU_000604_1_22_2"/>
<dbReference type="Proteomes" id="UP000001169">
    <property type="component" value="Chromosome I"/>
</dbReference>
<dbReference type="GO" id="GO:0005886">
    <property type="term" value="C:plasma membrane"/>
    <property type="evidence" value="ECO:0007669"/>
    <property type="project" value="UniProtKB-SubCell"/>
</dbReference>
<dbReference type="GO" id="GO:0005524">
    <property type="term" value="F:ATP binding"/>
    <property type="evidence" value="ECO:0007669"/>
    <property type="project" value="UniProtKB-KW"/>
</dbReference>
<dbReference type="GO" id="GO:0016887">
    <property type="term" value="F:ATP hydrolysis activity"/>
    <property type="evidence" value="ECO:0007669"/>
    <property type="project" value="InterPro"/>
</dbReference>
<dbReference type="GO" id="GO:0015415">
    <property type="term" value="F:ATPase-coupled phosphate ion transmembrane transporter activity"/>
    <property type="evidence" value="ECO:0007669"/>
    <property type="project" value="UniProtKB-EC"/>
</dbReference>
<dbReference type="GO" id="GO:0035435">
    <property type="term" value="P:phosphate ion transmembrane transport"/>
    <property type="evidence" value="ECO:0007669"/>
    <property type="project" value="InterPro"/>
</dbReference>
<dbReference type="CDD" id="cd03260">
    <property type="entry name" value="ABC_PstB_phosphate_transporter"/>
    <property type="match status" value="1"/>
</dbReference>
<dbReference type="Gene3D" id="3.40.50.300">
    <property type="entry name" value="P-loop containing nucleotide triphosphate hydrolases"/>
    <property type="match status" value="1"/>
</dbReference>
<dbReference type="InterPro" id="IPR003593">
    <property type="entry name" value="AAA+_ATPase"/>
</dbReference>
<dbReference type="InterPro" id="IPR003439">
    <property type="entry name" value="ABC_transporter-like_ATP-bd"/>
</dbReference>
<dbReference type="InterPro" id="IPR017871">
    <property type="entry name" value="ABC_transporter-like_CS"/>
</dbReference>
<dbReference type="InterPro" id="IPR027417">
    <property type="entry name" value="P-loop_NTPase"/>
</dbReference>
<dbReference type="InterPro" id="IPR005670">
    <property type="entry name" value="PstB-like"/>
</dbReference>
<dbReference type="NCBIfam" id="TIGR00972">
    <property type="entry name" value="3a0107s01c2"/>
    <property type="match status" value="1"/>
</dbReference>
<dbReference type="PANTHER" id="PTHR43423">
    <property type="entry name" value="ABC TRANSPORTER I FAMILY MEMBER 17"/>
    <property type="match status" value="1"/>
</dbReference>
<dbReference type="PANTHER" id="PTHR43423:SF1">
    <property type="entry name" value="ABC TRANSPORTER I FAMILY MEMBER 17"/>
    <property type="match status" value="1"/>
</dbReference>
<dbReference type="Pfam" id="PF00005">
    <property type="entry name" value="ABC_tran"/>
    <property type="match status" value="1"/>
</dbReference>
<dbReference type="SMART" id="SM00382">
    <property type="entry name" value="AAA"/>
    <property type="match status" value="1"/>
</dbReference>
<dbReference type="SUPFAM" id="SSF52540">
    <property type="entry name" value="P-loop containing nucleoside triphosphate hydrolases"/>
    <property type="match status" value="1"/>
</dbReference>
<dbReference type="PROSITE" id="PS00211">
    <property type="entry name" value="ABC_TRANSPORTER_1"/>
    <property type="match status" value="1"/>
</dbReference>
<dbReference type="PROSITE" id="PS50893">
    <property type="entry name" value="ABC_TRANSPORTER_2"/>
    <property type="match status" value="1"/>
</dbReference>
<dbReference type="PROSITE" id="PS51238">
    <property type="entry name" value="PSTB"/>
    <property type="match status" value="1"/>
</dbReference>
<keyword id="KW-0067">ATP-binding</keyword>
<keyword id="KW-1003">Cell membrane</keyword>
<keyword id="KW-0472">Membrane</keyword>
<keyword id="KW-0547">Nucleotide-binding</keyword>
<keyword id="KW-0592">Phosphate transport</keyword>
<keyword id="KW-1185">Reference proteome</keyword>
<keyword id="KW-1278">Translocase</keyword>
<keyword id="KW-0813">Transport</keyword>